<proteinExistence type="inferred from homology"/>
<dbReference type="EMBL" id="X52823">
    <property type="protein sequence ID" value="CAA37005.1"/>
    <property type="molecule type" value="Genomic_DNA"/>
</dbReference>
<dbReference type="EMBL" id="U07827">
    <property type="protein sequence ID" value="AAA53549.1"/>
    <property type="molecule type" value="Genomic_DNA"/>
</dbReference>
<dbReference type="PIR" id="S10509">
    <property type="entry name" value="MMNHPB"/>
</dbReference>
<dbReference type="SMR" id="P18195"/>
<dbReference type="Reactome" id="R-HSA-3000484">
    <property type="pathway name" value="Scavenging by Class F Receptors"/>
</dbReference>
<dbReference type="GO" id="GO:0009279">
    <property type="term" value="C:cell outer membrane"/>
    <property type="evidence" value="ECO:0007669"/>
    <property type="project" value="UniProtKB-SubCell"/>
</dbReference>
<dbReference type="GO" id="GO:0071682">
    <property type="term" value="C:endocytic vesicle lumen"/>
    <property type="evidence" value="ECO:0000304"/>
    <property type="project" value="Reactome"/>
</dbReference>
<dbReference type="GO" id="GO:0005576">
    <property type="term" value="C:extracellular region"/>
    <property type="evidence" value="ECO:0000304"/>
    <property type="project" value="Reactome"/>
</dbReference>
<dbReference type="GO" id="GO:0046930">
    <property type="term" value="C:pore complex"/>
    <property type="evidence" value="ECO:0007669"/>
    <property type="project" value="UniProtKB-KW"/>
</dbReference>
<dbReference type="GO" id="GO:0015288">
    <property type="term" value="F:porin activity"/>
    <property type="evidence" value="ECO:0007669"/>
    <property type="project" value="UniProtKB-KW"/>
</dbReference>
<dbReference type="GO" id="GO:0034220">
    <property type="term" value="P:monoatomic ion transmembrane transport"/>
    <property type="evidence" value="ECO:0007669"/>
    <property type="project" value="InterPro"/>
</dbReference>
<dbReference type="CDD" id="cd00342">
    <property type="entry name" value="gram_neg_porins"/>
    <property type="match status" value="1"/>
</dbReference>
<dbReference type="FunFam" id="2.40.160.10:FF:000023">
    <property type="entry name" value="Outer membrane protein II"/>
    <property type="match status" value="1"/>
</dbReference>
<dbReference type="Gene3D" id="2.40.160.10">
    <property type="entry name" value="Porin"/>
    <property type="match status" value="1"/>
</dbReference>
<dbReference type="InterPro" id="IPR050298">
    <property type="entry name" value="Gram-neg_bact_OMP"/>
</dbReference>
<dbReference type="InterPro" id="IPR033900">
    <property type="entry name" value="Gram_neg_porin_domain"/>
</dbReference>
<dbReference type="InterPro" id="IPR023614">
    <property type="entry name" value="Porin_dom_sf"/>
</dbReference>
<dbReference type="InterPro" id="IPR001702">
    <property type="entry name" value="Porin_Gram-ve"/>
</dbReference>
<dbReference type="InterPro" id="IPR013793">
    <property type="entry name" value="Porin_Gram-ve_CS"/>
</dbReference>
<dbReference type="InterPro" id="IPR002299">
    <property type="entry name" value="Porin_Neis"/>
</dbReference>
<dbReference type="NCBIfam" id="NF040479">
    <property type="entry name" value="porin_porB_Neis"/>
    <property type="match status" value="1"/>
</dbReference>
<dbReference type="PANTHER" id="PTHR34501:SF9">
    <property type="entry name" value="MAJOR OUTER MEMBRANE PROTEIN P.IA"/>
    <property type="match status" value="1"/>
</dbReference>
<dbReference type="PANTHER" id="PTHR34501">
    <property type="entry name" value="PROTEIN YDDL-RELATED"/>
    <property type="match status" value="1"/>
</dbReference>
<dbReference type="Pfam" id="PF00267">
    <property type="entry name" value="Porin_1"/>
    <property type="match status" value="1"/>
</dbReference>
<dbReference type="PRINTS" id="PR00182">
    <property type="entry name" value="ECOLNEIPORIN"/>
</dbReference>
<dbReference type="PRINTS" id="PR00184">
    <property type="entry name" value="NEISSPPORIN"/>
</dbReference>
<dbReference type="SUPFAM" id="SSF56935">
    <property type="entry name" value="Porins"/>
    <property type="match status" value="1"/>
</dbReference>
<dbReference type="PROSITE" id="PS00576">
    <property type="entry name" value="GRAM_NEG_PORIN"/>
    <property type="match status" value="1"/>
</dbReference>
<organism>
    <name type="scientific">Neisseria gonorrhoeae</name>
    <dbReference type="NCBI Taxonomy" id="485"/>
    <lineage>
        <taxon>Bacteria</taxon>
        <taxon>Pseudomonadati</taxon>
        <taxon>Pseudomonadota</taxon>
        <taxon>Betaproteobacteria</taxon>
        <taxon>Neisseriales</taxon>
        <taxon>Neisseriaceae</taxon>
        <taxon>Neisseria</taxon>
    </lineage>
</organism>
<gene>
    <name type="primary">porB</name>
</gene>
<sequence>MKKSLIALTLAALPVAATADVTLYGAIKAGVQTYRSVEHTDGKVSKVETGSEIADFGSKIGFKGQEDLGNGLKAVWQLEQGASVAGTNTGWGNKQSFVGLKGGFGTIRAGSLNSPLKNTDANVNAWESGKFTGNVLEISGMAKREHRYLSVRYDSPEFAGFSGSVQYAPKDNSGSNGESYHVGLNYQNSGFFAQYAGLFQRYGEGTKKIEYEHQVYSIPSLFVEKLQVHRLVGGYDNNALYVSVAAQQQDAKLYGARRANSHNSQTEVAATAAYRFGNVTPRVSYAHGFKGTVDSADHDNTYDQVVVGAEYDFSKRTSALVSAGWLQEGKGADKIVSTASAVVLRHKF</sequence>
<reference key="1">
    <citation type="journal article" date="1990" name="Nucleic Acids Res.">
        <title>The nucleotide sequence of the por gene from Neisseria gonorrhoeae strain P9 encoding outer membrane protein PIB.</title>
        <authorList>
            <person name="Butt N.J."/>
            <person name="Lambden P.R."/>
            <person name="Heckels J.E."/>
        </authorList>
    </citation>
    <scope>NUCLEOTIDE SEQUENCE [GENOMIC DNA]</scope>
    <source>
        <strain>P9 / Serovar IB-26</strain>
    </source>
</reference>
<reference key="2">
    <citation type="journal article" date="1993" name="Med. Microbiol. Immunol.">
        <title>Polymerase chain reaction and direct sequencing of Neisseria gonorrhoeae protein IB gene: partial nucleotide and amino acid sequence analysis of strains S4, S11, S48 (serovar IB4) and S34 (serovar IB5).</title>
        <authorList>
            <person name="Lau Q."/>
            <person name="Chow V."/>
            <person name="Poh C."/>
        </authorList>
    </citation>
    <scope>NUCLEOTIDE SEQUENCE [GENOMIC DNA] OF 175-268</scope>
    <source>
        <strain>S4 / Serovar IB-4</strain>
    </source>
</reference>
<keyword id="KW-0998">Cell outer membrane</keyword>
<keyword id="KW-0406">Ion transport</keyword>
<keyword id="KW-0472">Membrane</keyword>
<keyword id="KW-0626">Porin</keyword>
<keyword id="KW-0732">Signal</keyword>
<keyword id="KW-0812">Transmembrane</keyword>
<keyword id="KW-1134">Transmembrane beta strand</keyword>
<keyword id="KW-0813">Transport</keyword>
<feature type="signal peptide">
    <location>
        <begin position="1"/>
        <end position="19"/>
    </location>
</feature>
<feature type="chain" id="PRO_0000025277" description="Major outer membrane protein P.IB">
    <location>
        <begin position="20"/>
        <end position="348"/>
    </location>
</feature>
<name>OMPB1_NEIGO</name>
<evidence type="ECO:0000305" key="1"/>
<protein>
    <recommendedName>
        <fullName>Major outer membrane protein P.IB</fullName>
        <shortName>PIB</shortName>
        <shortName>Protein IB</shortName>
    </recommendedName>
    <alternativeName>
        <fullName>Porin</fullName>
    </alternativeName>
</protein>
<comment type="function">
    <text>Serves as a slightly cation selective porin. Major antigen on the gonococcal cell surface and it may have pathogenic properties in addition to its porin activity.</text>
</comment>
<comment type="subunit">
    <text>Homotrimer.</text>
</comment>
<comment type="subcellular location">
    <subcellularLocation>
        <location>Cell outer membrane</location>
        <topology>Multi-pass membrane protein</topology>
    </subcellularLocation>
</comment>
<comment type="similarity">
    <text evidence="1">Belongs to the Gram-negative porin family.</text>
</comment>
<accession>P18195</accession>
<accession>P97161</accession>